<keyword id="KW-0002">3D-structure</keyword>
<keyword id="KW-0007">Acetylation</keyword>
<keyword id="KW-0963">Cytoplasm</keyword>
<keyword id="KW-0903">Direct protein sequencing</keyword>
<keyword id="KW-0343">GTPase activation</keyword>
<keyword id="KW-1017">Isopeptide bond</keyword>
<keyword id="KW-0597">Phosphoprotein</keyword>
<keyword id="KW-1185">Reference proteome</keyword>
<keyword id="KW-0832">Ubl conjugation</keyword>
<dbReference type="EMBL" id="AB055070">
    <property type="protein sequence ID" value="BAB21527.1"/>
    <property type="molecule type" value="mRNA"/>
</dbReference>
<dbReference type="EMBL" id="AK075656">
    <property type="protein sequence ID" value="BAC35881.1"/>
    <property type="molecule type" value="mRNA"/>
</dbReference>
<dbReference type="EMBL" id="AK077343">
    <property type="protein sequence ID" value="BAC36761.1"/>
    <property type="molecule type" value="mRNA"/>
</dbReference>
<dbReference type="EMBL" id="AK143516">
    <property type="protein sequence ID" value="BAE25410.1"/>
    <property type="molecule type" value="mRNA"/>
</dbReference>
<dbReference type="EMBL" id="AK156819">
    <property type="protein sequence ID" value="BAE33865.1"/>
    <property type="molecule type" value="mRNA"/>
</dbReference>
<dbReference type="EMBL" id="AK165241">
    <property type="protein sequence ID" value="BAE38098.1"/>
    <property type="molecule type" value="mRNA"/>
</dbReference>
<dbReference type="EMBL" id="AK170553">
    <property type="protein sequence ID" value="BAE41876.1"/>
    <property type="molecule type" value="mRNA"/>
</dbReference>
<dbReference type="EMBL" id="AK170718">
    <property type="protein sequence ID" value="BAE41976.1"/>
    <property type="molecule type" value="mRNA"/>
</dbReference>
<dbReference type="EMBL" id="AK172140">
    <property type="protein sequence ID" value="BAE42844.1"/>
    <property type="molecule type" value="mRNA"/>
</dbReference>
<dbReference type="EMBL" id="AL663030">
    <property type="status" value="NOT_ANNOTATED_CDS"/>
    <property type="molecule type" value="Genomic_DNA"/>
</dbReference>
<dbReference type="EMBL" id="BC004732">
    <property type="protein sequence ID" value="AAH04732.1"/>
    <property type="molecule type" value="mRNA"/>
</dbReference>
<dbReference type="EMBL" id="BC086755">
    <property type="protein sequence ID" value="AAH86755.1"/>
    <property type="molecule type" value="mRNA"/>
</dbReference>
<dbReference type="CCDS" id="CCDS25743.1"/>
<dbReference type="RefSeq" id="NP_001350354.1">
    <property type="nucleotide sequence ID" value="NM_001363425.1"/>
</dbReference>
<dbReference type="RefSeq" id="NP_598557.3">
    <property type="nucleotide sequence ID" value="NM_133796.7"/>
</dbReference>
<dbReference type="RefSeq" id="XP_006532612.1">
    <property type="nucleotide sequence ID" value="XM_006532549.3"/>
</dbReference>
<dbReference type="PDB" id="4F38">
    <property type="method" value="X-ray"/>
    <property type="resolution" value="2.80 A"/>
    <property type="chains" value="B=2-204"/>
</dbReference>
<dbReference type="PDBsum" id="4F38"/>
<dbReference type="SMR" id="Q99PT1"/>
<dbReference type="BioGRID" id="228703">
    <property type="interactions" value="22"/>
</dbReference>
<dbReference type="FunCoup" id="Q99PT1">
    <property type="interactions" value="2573"/>
</dbReference>
<dbReference type="IntAct" id="Q99PT1">
    <property type="interactions" value="3"/>
</dbReference>
<dbReference type="MINT" id="Q99PT1"/>
<dbReference type="STRING" id="10090.ENSMUSP00000063714"/>
<dbReference type="GlyGen" id="Q99PT1">
    <property type="glycosylation" value="1 site, 1 O-linked glycan (1 site)"/>
</dbReference>
<dbReference type="iPTMnet" id="Q99PT1"/>
<dbReference type="PhosphoSitePlus" id="Q99PT1"/>
<dbReference type="SwissPalm" id="Q99PT1"/>
<dbReference type="REPRODUCTION-2DPAGE" id="IPI00322312"/>
<dbReference type="REPRODUCTION-2DPAGE" id="Q99PT1"/>
<dbReference type="jPOST" id="Q99PT1"/>
<dbReference type="PaxDb" id="10090-ENSMUSP00000063714"/>
<dbReference type="PeptideAtlas" id="Q99PT1"/>
<dbReference type="ProteomicsDB" id="267790"/>
<dbReference type="Pumba" id="Q99PT1"/>
<dbReference type="TopDownProteomics" id="Q99PT1"/>
<dbReference type="Antibodypedia" id="3880">
    <property type="antibodies" value="573 antibodies from 38 providers"/>
</dbReference>
<dbReference type="DNASU" id="192662"/>
<dbReference type="Ensembl" id="ENSMUST00000067936.6">
    <property type="protein sequence ID" value="ENSMUSP00000063714.6"/>
    <property type="gene ID" value="ENSMUSG00000025132.14"/>
</dbReference>
<dbReference type="Ensembl" id="ENSMUST00000106197.10">
    <property type="protein sequence ID" value="ENSMUSP00000101803.4"/>
    <property type="gene ID" value="ENSMUSG00000025132.14"/>
</dbReference>
<dbReference type="GeneID" id="192662"/>
<dbReference type="KEGG" id="mmu:192662"/>
<dbReference type="UCSC" id="uc007mtj.1">
    <property type="organism name" value="mouse"/>
</dbReference>
<dbReference type="AGR" id="MGI:2178103"/>
<dbReference type="CTD" id="396"/>
<dbReference type="MGI" id="MGI:2178103">
    <property type="gene designation" value="Arhgdia"/>
</dbReference>
<dbReference type="VEuPathDB" id="HostDB:ENSMUSG00000025132"/>
<dbReference type="eggNOG" id="KOG3205">
    <property type="taxonomic scope" value="Eukaryota"/>
</dbReference>
<dbReference type="GeneTree" id="ENSGT00390000006233"/>
<dbReference type="HOGENOM" id="CLU_076228_1_1_1"/>
<dbReference type="InParanoid" id="Q99PT1"/>
<dbReference type="OMA" id="KRCYMEL"/>
<dbReference type="OrthoDB" id="1683373at2759"/>
<dbReference type="PhylomeDB" id="Q99PT1"/>
<dbReference type="TreeFam" id="TF105387"/>
<dbReference type="Reactome" id="R-MMU-193634">
    <property type="pathway name" value="Axonal growth inhibition (RHOA activation)"/>
</dbReference>
<dbReference type="Reactome" id="R-MMU-209563">
    <property type="pathway name" value="Axonal growth stimulation"/>
</dbReference>
<dbReference type="Reactome" id="R-MMU-8980692">
    <property type="pathway name" value="RHOA GTPase cycle"/>
</dbReference>
<dbReference type="Reactome" id="R-MMU-9013106">
    <property type="pathway name" value="RHOC GTPase cycle"/>
</dbReference>
<dbReference type="Reactome" id="R-MMU-9013148">
    <property type="pathway name" value="CDC42 GTPase cycle"/>
</dbReference>
<dbReference type="Reactome" id="R-MMU-9013149">
    <property type="pathway name" value="RAC1 GTPase cycle"/>
</dbReference>
<dbReference type="Reactome" id="R-MMU-9013404">
    <property type="pathway name" value="RAC2 GTPase cycle"/>
</dbReference>
<dbReference type="Reactome" id="R-MMU-9013407">
    <property type="pathway name" value="RHOH GTPase cycle"/>
</dbReference>
<dbReference type="Reactome" id="R-MMU-9013408">
    <property type="pathway name" value="RHOG GTPase cycle"/>
</dbReference>
<dbReference type="BioGRID-ORCS" id="192662">
    <property type="hits" value="3 hits in 79 CRISPR screens"/>
</dbReference>
<dbReference type="ChiTaRS" id="Arhgdia">
    <property type="organism name" value="mouse"/>
</dbReference>
<dbReference type="EvolutionaryTrace" id="Q99PT1"/>
<dbReference type="PRO" id="PR:Q99PT1"/>
<dbReference type="Proteomes" id="UP000000589">
    <property type="component" value="Chromosome 11"/>
</dbReference>
<dbReference type="RNAct" id="Q99PT1">
    <property type="molecule type" value="protein"/>
</dbReference>
<dbReference type="Bgee" id="ENSMUSG00000025132">
    <property type="expression patterns" value="Expressed in embryonic post-anal tail and 274 other cell types or tissues"/>
</dbReference>
<dbReference type="GO" id="GO:0005737">
    <property type="term" value="C:cytoplasm"/>
    <property type="evidence" value="ECO:0007669"/>
    <property type="project" value="UniProtKB-SubCell"/>
</dbReference>
<dbReference type="GO" id="GO:0001772">
    <property type="term" value="C:immunological synapse"/>
    <property type="evidence" value="ECO:0000314"/>
    <property type="project" value="MGI"/>
</dbReference>
<dbReference type="GO" id="GO:0016020">
    <property type="term" value="C:membrane"/>
    <property type="evidence" value="ECO:0000314"/>
    <property type="project" value="UniProtKB"/>
</dbReference>
<dbReference type="GO" id="GO:0005634">
    <property type="term" value="C:nucleus"/>
    <property type="evidence" value="ECO:0000314"/>
    <property type="project" value="UniProtKB"/>
</dbReference>
<dbReference type="GO" id="GO:0098685">
    <property type="term" value="C:Schaffer collateral - CA1 synapse"/>
    <property type="evidence" value="ECO:0000314"/>
    <property type="project" value="SynGO"/>
</dbReference>
<dbReference type="GO" id="GO:0005096">
    <property type="term" value="F:GTPase activator activity"/>
    <property type="evidence" value="ECO:0007669"/>
    <property type="project" value="UniProtKB-KW"/>
</dbReference>
<dbReference type="GO" id="GO:0005094">
    <property type="term" value="F:Rho GDP-dissociation inhibitor activity"/>
    <property type="evidence" value="ECO:0000314"/>
    <property type="project" value="MGI"/>
</dbReference>
<dbReference type="GO" id="GO:0032880">
    <property type="term" value="P:regulation of protein localization"/>
    <property type="evidence" value="ECO:0000314"/>
    <property type="project" value="MGI"/>
</dbReference>
<dbReference type="GO" id="GO:0035023">
    <property type="term" value="P:regulation of Rho protein signal transduction"/>
    <property type="evidence" value="ECO:0007669"/>
    <property type="project" value="Ensembl"/>
</dbReference>
<dbReference type="GO" id="GO:0098693">
    <property type="term" value="P:regulation of synaptic vesicle cycle"/>
    <property type="evidence" value="ECO:0000314"/>
    <property type="project" value="SynGO"/>
</dbReference>
<dbReference type="GO" id="GO:0007266">
    <property type="term" value="P:Rho protein signal transduction"/>
    <property type="evidence" value="ECO:0000314"/>
    <property type="project" value="MGI"/>
</dbReference>
<dbReference type="GO" id="GO:0071526">
    <property type="term" value="P:semaphorin-plexin signaling pathway"/>
    <property type="evidence" value="ECO:0000315"/>
    <property type="project" value="UniProtKB"/>
</dbReference>
<dbReference type="FunFam" id="2.70.50.30:FF:000004">
    <property type="entry name" value="Rho GDP-dissociation inhibitor 1"/>
    <property type="match status" value="1"/>
</dbReference>
<dbReference type="Gene3D" id="2.70.50.30">
    <property type="entry name" value="Coagulation Factor XIII, subunit A, domain 1"/>
    <property type="match status" value="1"/>
</dbReference>
<dbReference type="InterPro" id="IPR014756">
    <property type="entry name" value="Ig_E-set"/>
</dbReference>
<dbReference type="InterPro" id="IPR000406">
    <property type="entry name" value="Rho_GDI"/>
</dbReference>
<dbReference type="InterPro" id="IPR024792">
    <property type="entry name" value="RhoGDI_dom_sf"/>
</dbReference>
<dbReference type="PANTHER" id="PTHR10980">
    <property type="entry name" value="RHO GDP-DISSOCIATION INHIBITOR"/>
    <property type="match status" value="1"/>
</dbReference>
<dbReference type="PANTHER" id="PTHR10980:SF9">
    <property type="entry name" value="RHO GDP-DISSOCIATION INHIBITOR 1"/>
    <property type="match status" value="1"/>
</dbReference>
<dbReference type="Pfam" id="PF02115">
    <property type="entry name" value="Rho_GDI"/>
    <property type="match status" value="1"/>
</dbReference>
<dbReference type="PRINTS" id="PR00492">
    <property type="entry name" value="RHOGDI"/>
</dbReference>
<dbReference type="SUPFAM" id="SSF81296">
    <property type="entry name" value="E set domains"/>
    <property type="match status" value="1"/>
</dbReference>
<protein>
    <recommendedName>
        <fullName>Rho GDP-dissociation inhibitor 1</fullName>
        <shortName>Rho GDI 1</shortName>
    </recommendedName>
    <alternativeName>
        <fullName>GDI-1</fullName>
    </alternativeName>
    <alternativeName>
        <fullName>Rho-GDI alpha</fullName>
    </alternativeName>
</protein>
<sequence>MAEQEPTAEQLAQIAAENEEDEHSVNYKPPAQKSIQEIQELDKDDESLRKYKEALLGRVAVSADPNVPNVIVTRLTLVCSTAPGPLELDLTGDLESFKKQSFVLKEGVEYRIKISFRVNREIVSGMKYIQHTYRKGVKIDKTDYMVGSYGPRAEEYEFLTPMEEAPKGMLARGSYNIKSRFTDDDKTDHLSWEWNLTIKKEWKD</sequence>
<organism>
    <name type="scientific">Mus musculus</name>
    <name type="common">Mouse</name>
    <dbReference type="NCBI Taxonomy" id="10090"/>
    <lineage>
        <taxon>Eukaryota</taxon>
        <taxon>Metazoa</taxon>
        <taxon>Chordata</taxon>
        <taxon>Craniata</taxon>
        <taxon>Vertebrata</taxon>
        <taxon>Euteleostomi</taxon>
        <taxon>Mammalia</taxon>
        <taxon>Eutheria</taxon>
        <taxon>Euarchontoglires</taxon>
        <taxon>Glires</taxon>
        <taxon>Rodentia</taxon>
        <taxon>Myomorpha</taxon>
        <taxon>Muroidea</taxon>
        <taxon>Muridae</taxon>
        <taxon>Murinae</taxon>
        <taxon>Mus</taxon>
        <taxon>Mus</taxon>
    </lineage>
</organism>
<comment type="function">
    <text evidence="3 5 6">Controls Rho proteins homeostasis. Regulates the GDP/GTP exchange reaction of the Rho proteins by inhibiting the dissociation of GDP from them, and the subsequent binding of GTP to them. Retains Rho proteins such as CDC42, RAC1 and RHOA in an inactive cytosolic pool, regulating their stability and protecting them from degradation. Actively involved in the recycling and distribution of activated Rho GTPases in the cell, mediates extraction from membranes of both inactive and activated molecules due its exceptionally high affinity for prenylated forms. Through the modulation of Rho proteins, may play a role in cell motility regulation. In glioma cells, inhibits cell migration and invasion by mediating the signals of SEMA5A and PLXNB3 that lead to inactivation of RAC1.</text>
</comment>
<comment type="subunit">
    <text evidence="1 4 5 6">Monomer (PubMed:22628549). Interacts with FER (By similarity). Interacts with PLXNB3 (PubMed:20696765). Forms a heterodimer with RAC1 (PubMed:23434736). Interacts with RHOA, the affinity is increased by three orders of magnitude when RHOA is prenylated (PubMed:23434736). Interacts with PSMD10; the interaction increases ARHGDIA association with RHOA, leading to ARHGDIA-mediated inactivation of RHOA and ROCK and prolonged AKT activation (By similarity). Interacts with KANK2; the interaction is direct and may regulate the interaction of ARHGDIA with RHOA, RAC1 and CDC42 (By similarity). Interacts with RHOC (By similarity). Interacts with CDC42 (PubMed:23434736). Interacts with NGFR (via death domain); NGFR binding decreases the affinity for RHOA (By similarity).</text>
</comment>
<comment type="interaction">
    <interactant intactId="EBI-494354">
        <id>Q99PT1</id>
    </interactant>
    <interactant intactId="EBI-644949">
        <id>P60764</id>
        <label>Rac3</label>
    </interactant>
    <organismsDiffer>false</organismsDiffer>
    <experiments>3</experiments>
</comment>
<comment type="subcellular location">
    <subcellularLocation>
        <location evidence="6">Cytoplasm</location>
    </subcellularLocation>
</comment>
<comment type="tissue specificity">
    <text evidence="3 6">In kidney glomerulus, expressed in podocytes and mesangial cells.</text>
</comment>
<comment type="disruption phenotype">
    <text evidence="3">From 1 week to 12 weeks of age, progressive deterioration from mild to massive albuminuria as consequence of renal abnormalities. In kidney, severe podocyte damage, glomerular lesions with focal and segmental sclerosis, along with prominent intratubular casts and luminal dilatation. Tubular epithelial cells show degenerative changes with basement membrane thickening. Increase of apoptotic cells in kidney glomeruli and tubulointerstitium.</text>
</comment>
<comment type="similarity">
    <text evidence="7">Belongs to the Rho GDI family.</text>
</comment>
<proteinExistence type="evidence at protein level"/>
<name>GDIR1_MOUSE</name>
<feature type="initiator methionine" description="Removed" evidence="1">
    <location>
        <position position="1"/>
    </location>
</feature>
<feature type="chain" id="PRO_0000219014" description="Rho GDP-dissociation inhibitor 1">
    <location>
        <begin position="2"/>
        <end position="204"/>
    </location>
</feature>
<feature type="region of interest" description="Disordered" evidence="2">
    <location>
        <begin position="1"/>
        <end position="36"/>
    </location>
</feature>
<feature type="modified residue" description="N-acetylalanine" evidence="1">
    <location>
        <position position="2"/>
    </location>
</feature>
<feature type="modified residue" description="Phosphoserine" evidence="8 9">
    <location>
        <position position="34"/>
    </location>
</feature>
<feature type="modified residue" description="N6-acetyllysine" evidence="10">
    <location>
        <position position="43"/>
    </location>
</feature>
<feature type="modified residue" description="Phosphoserine" evidence="1">
    <location>
        <position position="47"/>
    </location>
</feature>
<feature type="modified residue" description="N6-acetyllysine" evidence="1">
    <location>
        <position position="105"/>
    </location>
</feature>
<feature type="modified residue" description="N6-acetyllysine" evidence="1">
    <location>
        <position position="127"/>
    </location>
</feature>
<feature type="modified residue" description="N6-acetyllysine; alternate" evidence="10">
    <location>
        <position position="141"/>
    </location>
</feature>
<feature type="modified residue" description="N6-succinyllysine; alternate" evidence="10">
    <location>
        <position position="141"/>
    </location>
</feature>
<feature type="modified residue" description="N6-acetyllysine" evidence="1">
    <location>
        <position position="178"/>
    </location>
</feature>
<feature type="cross-link" description="Glycyl lysine isopeptide (Lys-Gly) (interchain with G-Cter in SUMO1); alternate" evidence="1">
    <location>
        <position position="138"/>
    </location>
</feature>
<feature type="cross-link" description="Glycyl lysine isopeptide (Lys-Gly) (interchain with G-Cter in SUMO2); alternate" evidence="1">
    <location>
        <position position="138"/>
    </location>
</feature>
<feature type="cross-link" description="Glycyl lysine isopeptide (Lys-Gly) (interchain with G-Cter in SUMO1); alternate" evidence="1">
    <location>
        <position position="141"/>
    </location>
</feature>
<feature type="cross-link" description="Glycyl lysine isopeptide (Lys-Gly) (interchain with G-Cter in SUMO2); alternate" evidence="1">
    <location>
        <position position="141"/>
    </location>
</feature>
<feature type="mutagenesis site" description="Loss of interaction with CDC42, RHOA and RAC1." evidence="6">
    <location>
        <position position="185"/>
    </location>
</feature>
<feature type="sequence conflict" description="In Ref. 4; AAH04732." evidence="7" ref="4">
    <original>L</original>
    <variation>P</variation>
    <location>
        <position position="55"/>
    </location>
</feature>
<feature type="helix" evidence="11">
    <location>
        <begin position="11"/>
        <end position="14"/>
    </location>
</feature>
<feature type="helix" evidence="11">
    <location>
        <begin position="35"/>
        <end position="40"/>
    </location>
</feature>
<feature type="turn" evidence="11">
    <location>
        <begin position="41"/>
        <end position="44"/>
    </location>
</feature>
<feature type="helix" evidence="11">
    <location>
        <begin position="46"/>
        <end position="56"/>
    </location>
</feature>
<feature type="strand" evidence="11">
    <location>
        <begin position="69"/>
        <end position="78"/>
    </location>
</feature>
<feature type="strand" evidence="11">
    <location>
        <begin position="86"/>
        <end position="92"/>
    </location>
</feature>
<feature type="helix" evidence="11">
    <location>
        <begin position="94"/>
        <end position="99"/>
    </location>
</feature>
<feature type="strand" evidence="11">
    <location>
        <begin position="101"/>
        <end position="105"/>
    </location>
</feature>
<feature type="strand" evidence="11">
    <location>
        <begin position="109"/>
        <end position="118"/>
    </location>
</feature>
<feature type="strand" evidence="11">
    <location>
        <begin position="123"/>
        <end position="134"/>
    </location>
</feature>
<feature type="strand" evidence="11">
    <location>
        <begin position="137"/>
        <end position="149"/>
    </location>
</feature>
<feature type="strand" evidence="11">
    <location>
        <begin position="152"/>
        <end position="156"/>
    </location>
</feature>
<feature type="turn" evidence="11">
    <location>
        <begin position="169"/>
        <end position="171"/>
    </location>
</feature>
<feature type="strand" evidence="11">
    <location>
        <begin position="173"/>
        <end position="182"/>
    </location>
</feature>
<feature type="strand" evidence="11">
    <location>
        <begin position="190"/>
        <end position="201"/>
    </location>
</feature>
<accession>Q99PT1</accession>
<accession>Q5M9P6</accession>
<accession>Q8BPI0</accession>
<accession>Q99KC4</accession>
<reference key="1">
    <citation type="submission" date="2001-01" db="EMBL/GenBank/DDBJ databases">
        <title>Mouse cDNA sequence for RhoGDI-1.</title>
        <authorList>
            <person name="Minamitani T."/>
            <person name="Matsumoto K."/>
        </authorList>
    </citation>
    <scope>NUCLEOTIDE SEQUENCE [MRNA]</scope>
</reference>
<reference key="2">
    <citation type="journal article" date="2005" name="Science">
        <title>The transcriptional landscape of the mammalian genome.</title>
        <authorList>
            <person name="Carninci P."/>
            <person name="Kasukawa T."/>
            <person name="Katayama S."/>
            <person name="Gough J."/>
            <person name="Frith M.C."/>
            <person name="Maeda N."/>
            <person name="Oyama R."/>
            <person name="Ravasi T."/>
            <person name="Lenhard B."/>
            <person name="Wells C."/>
            <person name="Kodzius R."/>
            <person name="Shimokawa K."/>
            <person name="Bajic V.B."/>
            <person name="Brenner S.E."/>
            <person name="Batalov S."/>
            <person name="Forrest A.R."/>
            <person name="Zavolan M."/>
            <person name="Davis M.J."/>
            <person name="Wilming L.G."/>
            <person name="Aidinis V."/>
            <person name="Allen J.E."/>
            <person name="Ambesi-Impiombato A."/>
            <person name="Apweiler R."/>
            <person name="Aturaliya R.N."/>
            <person name="Bailey T.L."/>
            <person name="Bansal M."/>
            <person name="Baxter L."/>
            <person name="Beisel K.W."/>
            <person name="Bersano T."/>
            <person name="Bono H."/>
            <person name="Chalk A.M."/>
            <person name="Chiu K.P."/>
            <person name="Choudhary V."/>
            <person name="Christoffels A."/>
            <person name="Clutterbuck D.R."/>
            <person name="Crowe M.L."/>
            <person name="Dalla E."/>
            <person name="Dalrymple B.P."/>
            <person name="de Bono B."/>
            <person name="Della Gatta G."/>
            <person name="di Bernardo D."/>
            <person name="Down T."/>
            <person name="Engstrom P."/>
            <person name="Fagiolini M."/>
            <person name="Faulkner G."/>
            <person name="Fletcher C.F."/>
            <person name="Fukushima T."/>
            <person name="Furuno M."/>
            <person name="Futaki S."/>
            <person name="Gariboldi M."/>
            <person name="Georgii-Hemming P."/>
            <person name="Gingeras T.R."/>
            <person name="Gojobori T."/>
            <person name="Green R.E."/>
            <person name="Gustincich S."/>
            <person name="Harbers M."/>
            <person name="Hayashi Y."/>
            <person name="Hensch T.K."/>
            <person name="Hirokawa N."/>
            <person name="Hill D."/>
            <person name="Huminiecki L."/>
            <person name="Iacono M."/>
            <person name="Ikeo K."/>
            <person name="Iwama A."/>
            <person name="Ishikawa T."/>
            <person name="Jakt M."/>
            <person name="Kanapin A."/>
            <person name="Katoh M."/>
            <person name="Kawasawa Y."/>
            <person name="Kelso J."/>
            <person name="Kitamura H."/>
            <person name="Kitano H."/>
            <person name="Kollias G."/>
            <person name="Krishnan S.P."/>
            <person name="Kruger A."/>
            <person name="Kummerfeld S.K."/>
            <person name="Kurochkin I.V."/>
            <person name="Lareau L.F."/>
            <person name="Lazarevic D."/>
            <person name="Lipovich L."/>
            <person name="Liu J."/>
            <person name="Liuni S."/>
            <person name="McWilliam S."/>
            <person name="Madan Babu M."/>
            <person name="Madera M."/>
            <person name="Marchionni L."/>
            <person name="Matsuda H."/>
            <person name="Matsuzawa S."/>
            <person name="Miki H."/>
            <person name="Mignone F."/>
            <person name="Miyake S."/>
            <person name="Morris K."/>
            <person name="Mottagui-Tabar S."/>
            <person name="Mulder N."/>
            <person name="Nakano N."/>
            <person name="Nakauchi H."/>
            <person name="Ng P."/>
            <person name="Nilsson R."/>
            <person name="Nishiguchi S."/>
            <person name="Nishikawa S."/>
            <person name="Nori F."/>
            <person name="Ohara O."/>
            <person name="Okazaki Y."/>
            <person name="Orlando V."/>
            <person name="Pang K.C."/>
            <person name="Pavan W.J."/>
            <person name="Pavesi G."/>
            <person name="Pesole G."/>
            <person name="Petrovsky N."/>
            <person name="Piazza S."/>
            <person name="Reed J."/>
            <person name="Reid J.F."/>
            <person name="Ring B.Z."/>
            <person name="Ringwald M."/>
            <person name="Rost B."/>
            <person name="Ruan Y."/>
            <person name="Salzberg S.L."/>
            <person name="Sandelin A."/>
            <person name="Schneider C."/>
            <person name="Schoenbach C."/>
            <person name="Sekiguchi K."/>
            <person name="Semple C.A."/>
            <person name="Seno S."/>
            <person name="Sessa L."/>
            <person name="Sheng Y."/>
            <person name="Shibata Y."/>
            <person name="Shimada H."/>
            <person name="Shimada K."/>
            <person name="Silva D."/>
            <person name="Sinclair B."/>
            <person name="Sperling S."/>
            <person name="Stupka E."/>
            <person name="Sugiura K."/>
            <person name="Sultana R."/>
            <person name="Takenaka Y."/>
            <person name="Taki K."/>
            <person name="Tammoja K."/>
            <person name="Tan S.L."/>
            <person name="Tang S."/>
            <person name="Taylor M.S."/>
            <person name="Tegner J."/>
            <person name="Teichmann S.A."/>
            <person name="Ueda H.R."/>
            <person name="van Nimwegen E."/>
            <person name="Verardo R."/>
            <person name="Wei C.L."/>
            <person name="Yagi K."/>
            <person name="Yamanishi H."/>
            <person name="Zabarovsky E."/>
            <person name="Zhu S."/>
            <person name="Zimmer A."/>
            <person name="Hide W."/>
            <person name="Bult C."/>
            <person name="Grimmond S.M."/>
            <person name="Teasdale R.D."/>
            <person name="Liu E.T."/>
            <person name="Brusic V."/>
            <person name="Quackenbush J."/>
            <person name="Wahlestedt C."/>
            <person name="Mattick J.S."/>
            <person name="Hume D.A."/>
            <person name="Kai C."/>
            <person name="Sasaki D."/>
            <person name="Tomaru Y."/>
            <person name="Fukuda S."/>
            <person name="Kanamori-Katayama M."/>
            <person name="Suzuki M."/>
            <person name="Aoki J."/>
            <person name="Arakawa T."/>
            <person name="Iida J."/>
            <person name="Imamura K."/>
            <person name="Itoh M."/>
            <person name="Kato T."/>
            <person name="Kawaji H."/>
            <person name="Kawagashira N."/>
            <person name="Kawashima T."/>
            <person name="Kojima M."/>
            <person name="Kondo S."/>
            <person name="Konno H."/>
            <person name="Nakano K."/>
            <person name="Ninomiya N."/>
            <person name="Nishio T."/>
            <person name="Okada M."/>
            <person name="Plessy C."/>
            <person name="Shibata K."/>
            <person name="Shiraki T."/>
            <person name="Suzuki S."/>
            <person name="Tagami M."/>
            <person name="Waki K."/>
            <person name="Watahiki A."/>
            <person name="Okamura-Oho Y."/>
            <person name="Suzuki H."/>
            <person name="Kawai J."/>
            <person name="Hayashizaki Y."/>
        </authorList>
    </citation>
    <scope>NUCLEOTIDE SEQUENCE [LARGE SCALE MRNA]</scope>
    <source>
        <strain>C57BL/6J</strain>
        <strain>NOD</strain>
        <tissue>Pituitary</tissue>
        <tissue>Spleen</tissue>
    </source>
</reference>
<reference key="3">
    <citation type="journal article" date="2009" name="PLoS Biol.">
        <title>Lineage-specific biology revealed by a finished genome assembly of the mouse.</title>
        <authorList>
            <person name="Church D.M."/>
            <person name="Goodstadt L."/>
            <person name="Hillier L.W."/>
            <person name="Zody M.C."/>
            <person name="Goldstein S."/>
            <person name="She X."/>
            <person name="Bult C.J."/>
            <person name="Agarwala R."/>
            <person name="Cherry J.L."/>
            <person name="DiCuccio M."/>
            <person name="Hlavina W."/>
            <person name="Kapustin Y."/>
            <person name="Meric P."/>
            <person name="Maglott D."/>
            <person name="Birtle Z."/>
            <person name="Marques A.C."/>
            <person name="Graves T."/>
            <person name="Zhou S."/>
            <person name="Teague B."/>
            <person name="Potamousis K."/>
            <person name="Churas C."/>
            <person name="Place M."/>
            <person name="Herschleb J."/>
            <person name="Runnheim R."/>
            <person name="Forrest D."/>
            <person name="Amos-Landgraf J."/>
            <person name="Schwartz D.C."/>
            <person name="Cheng Z."/>
            <person name="Lindblad-Toh K."/>
            <person name="Eichler E.E."/>
            <person name="Ponting C.P."/>
        </authorList>
    </citation>
    <scope>NUCLEOTIDE SEQUENCE [LARGE SCALE GENOMIC DNA]</scope>
    <source>
        <strain>C57BL/6J</strain>
    </source>
</reference>
<reference key="4">
    <citation type="journal article" date="2004" name="Genome Res.">
        <title>The status, quality, and expansion of the NIH full-length cDNA project: the Mammalian Gene Collection (MGC).</title>
        <authorList>
            <consortium name="The MGC Project Team"/>
        </authorList>
    </citation>
    <scope>NUCLEOTIDE SEQUENCE [LARGE SCALE MRNA]</scope>
    <source>
        <strain>C57BL/6J</strain>
        <tissue>Brain</tissue>
    </source>
</reference>
<reference key="5">
    <citation type="submission" date="2007-07" db="UniProtKB">
        <authorList>
            <person name="Lubec G."/>
            <person name="Klug S."/>
            <person name="Yang J.W."/>
            <person name="Zigmond M."/>
        </authorList>
    </citation>
    <scope>PROTEIN SEQUENCE OF 34-49; 59-98 AND 153-167</scope>
    <scope>IDENTIFICATION BY MASS SPECTROMETRY</scope>
    <source>
        <tissue>Brain</tissue>
        <tissue>Hippocampus</tissue>
    </source>
</reference>
<reference key="6">
    <citation type="journal article" date="2007" name="Proc. Natl. Acad. Sci. U.S.A.">
        <title>Large-scale phosphorylation analysis of mouse liver.</title>
        <authorList>
            <person name="Villen J."/>
            <person name="Beausoleil S.A."/>
            <person name="Gerber S.A."/>
            <person name="Gygi S.P."/>
        </authorList>
    </citation>
    <scope>PHOSPHORYLATION [LARGE SCALE ANALYSIS] AT SER-34</scope>
    <scope>IDENTIFICATION BY MASS SPECTROMETRY [LARGE SCALE ANALYSIS]</scope>
    <source>
        <tissue>Liver</tissue>
    </source>
</reference>
<reference key="7">
    <citation type="journal article" date="2008" name="Nat. Med.">
        <title>Modification of mineralocorticoid receptor function by Rac1 GTPase: implication in proteinuric kidney disease.</title>
        <authorList>
            <person name="Shibata S."/>
            <person name="Nagase M."/>
            <person name="Yoshida S."/>
            <person name="Kawarazaki W."/>
            <person name="Kurihara H."/>
            <person name="Tanaka H."/>
            <person name="Miyoshi J."/>
            <person name="Takai Y."/>
            <person name="Fujita T."/>
        </authorList>
    </citation>
    <scope>FUNCTION</scope>
    <scope>DISRUPTION PHENOTYPE</scope>
    <scope>TISSUE SPECIFICITY</scope>
</reference>
<reference key="8">
    <citation type="journal article" date="2010" name="Cell">
        <title>A tissue-specific atlas of mouse protein phosphorylation and expression.</title>
        <authorList>
            <person name="Huttlin E.L."/>
            <person name="Jedrychowski M.P."/>
            <person name="Elias J.E."/>
            <person name="Goswami T."/>
            <person name="Rad R."/>
            <person name="Beausoleil S.A."/>
            <person name="Villen J."/>
            <person name="Haas W."/>
            <person name="Sowa M.E."/>
            <person name="Gygi S.P."/>
        </authorList>
    </citation>
    <scope>PHOSPHORYLATION [LARGE SCALE ANALYSIS] AT SER-34</scope>
    <scope>IDENTIFICATION BY MASS SPECTROMETRY [LARGE SCALE ANALYSIS]</scope>
    <source>
        <tissue>Brain</tissue>
        <tissue>Brown adipose tissue</tissue>
        <tissue>Heart</tissue>
        <tissue>Kidney</tissue>
        <tissue>Liver</tissue>
        <tissue>Lung</tissue>
        <tissue>Pancreas</tissue>
        <tissue>Spleen</tissue>
        <tissue>Testis</tissue>
    </source>
</reference>
<reference key="9">
    <citation type="journal article" date="2010" name="J. Biol. Chem.">
        <title>Semaphorin 5A and plexin-B3 inhibit human glioma cell motility through RhoGDIalpha-mediated inactivation of Rac1 GTPase.</title>
        <authorList>
            <person name="Li X."/>
            <person name="Lee A.Y."/>
        </authorList>
    </citation>
    <scope>INTERACTION WITH PLXNB3</scope>
</reference>
<reference key="10">
    <citation type="journal article" date="2013" name="J. Med. Genet.">
        <title>ARHGDIA: a novel gene implicated in nephrotic syndrome.</title>
        <authorList>
            <person name="Gupta I.R."/>
            <person name="Baldwin C."/>
            <person name="Auguste D."/>
            <person name="Ha K.C."/>
            <person name="El Andalousi J."/>
            <person name="Fahiminiya S."/>
            <person name="Bitzan M."/>
            <person name="Bernard C."/>
            <person name="Akbari M.R."/>
            <person name="Narod S.A."/>
            <person name="Rosenblatt D.S."/>
            <person name="Majewski J."/>
            <person name="Takano T."/>
        </authorList>
    </citation>
    <scope>FUNCTION</scope>
    <scope>INTERACTION WITH RHOA; RAC1 AND CDC42</scope>
    <scope>TISSUE SPECIFICITY</scope>
    <scope>SUBCELLULAR LOCATION</scope>
    <scope>MUTAGENESIS OF ASP-185</scope>
</reference>
<reference key="11">
    <citation type="journal article" date="2013" name="Mol. Cell">
        <title>SIRT5-mediated lysine desuccinylation impacts diverse metabolic pathways.</title>
        <authorList>
            <person name="Park J."/>
            <person name="Chen Y."/>
            <person name="Tishkoff D.X."/>
            <person name="Peng C."/>
            <person name="Tan M."/>
            <person name="Dai L."/>
            <person name="Xie Z."/>
            <person name="Zhang Y."/>
            <person name="Zwaans B.M."/>
            <person name="Skinner M.E."/>
            <person name="Lombard D.B."/>
            <person name="Zhao Y."/>
        </authorList>
    </citation>
    <scope>ACETYLATION [LARGE SCALE ANALYSIS] AT LYS-43 AND LYS-141</scope>
    <scope>SUCCINYLATION [LARGE SCALE ANALYSIS] AT LYS-141</scope>
    <scope>IDENTIFICATION BY MASS SPECTROMETRY [LARGE SCALE ANALYSIS]</scope>
    <source>
        <tissue>Embryonic fibroblast</tissue>
    </source>
</reference>
<reference key="12">
    <citation type="journal article" date="2012" name="J. Biol. Chem.">
        <title>Quantitative analysis of prenylated RhoA interaction with its chaperone, RhoGDI.</title>
        <authorList>
            <person name="Tnimov Z."/>
            <person name="Guo Z."/>
            <person name="Gambin Y."/>
            <person name="Nguyen U.T."/>
            <person name="Wu Y.W."/>
            <person name="Abankwa D."/>
            <person name="Stigter A."/>
            <person name="Collins B.M."/>
            <person name="Waldmann H."/>
            <person name="Goody R.S."/>
            <person name="Alexandrov K."/>
        </authorList>
    </citation>
    <scope>X-RAY CRYSTALLOGRAPHY (2.8 ANGSTROMS) OF 2-204 IN COMPLEX WITH PRENYLATED RHOA</scope>
    <scope>FUNCTION</scope>
    <scope>SUBUNIT</scope>
</reference>
<gene>
    <name type="primary">Arhgdia</name>
    <name type="synonym">C87222</name>
    <name type="synonym">Gdi1</name>
</gene>
<evidence type="ECO:0000250" key="1">
    <source>
        <dbReference type="UniProtKB" id="P52565"/>
    </source>
</evidence>
<evidence type="ECO:0000256" key="2">
    <source>
        <dbReference type="SAM" id="MobiDB-lite"/>
    </source>
</evidence>
<evidence type="ECO:0000269" key="3">
    <source>
    </source>
</evidence>
<evidence type="ECO:0000269" key="4">
    <source>
    </source>
</evidence>
<evidence type="ECO:0000269" key="5">
    <source>
    </source>
</evidence>
<evidence type="ECO:0000269" key="6">
    <source>
    </source>
</evidence>
<evidence type="ECO:0000305" key="7"/>
<evidence type="ECO:0007744" key="8">
    <source>
    </source>
</evidence>
<evidence type="ECO:0007744" key="9">
    <source>
    </source>
</evidence>
<evidence type="ECO:0007744" key="10">
    <source>
    </source>
</evidence>
<evidence type="ECO:0007829" key="11">
    <source>
        <dbReference type="PDB" id="4F38"/>
    </source>
</evidence>